<accession>A7GFJ3</accession>
<comment type="function">
    <text evidence="1">Catalyzes the phosphorylation of the hydroxyl group of 4-methyl-5-beta-hydroxyethylthiazole (THZ).</text>
</comment>
<comment type="catalytic activity">
    <reaction evidence="1">
        <text>5-(2-hydroxyethyl)-4-methylthiazole + ATP = 4-methyl-5-(2-phosphooxyethyl)-thiazole + ADP + H(+)</text>
        <dbReference type="Rhea" id="RHEA:24212"/>
        <dbReference type="ChEBI" id="CHEBI:15378"/>
        <dbReference type="ChEBI" id="CHEBI:17957"/>
        <dbReference type="ChEBI" id="CHEBI:30616"/>
        <dbReference type="ChEBI" id="CHEBI:58296"/>
        <dbReference type="ChEBI" id="CHEBI:456216"/>
        <dbReference type="EC" id="2.7.1.50"/>
    </reaction>
</comment>
<comment type="cofactor">
    <cofactor evidence="1">
        <name>Mg(2+)</name>
        <dbReference type="ChEBI" id="CHEBI:18420"/>
    </cofactor>
</comment>
<comment type="pathway">
    <text evidence="1">Cofactor biosynthesis; thiamine diphosphate biosynthesis; 4-methyl-5-(2-phosphoethyl)-thiazole from 5-(2-hydroxyethyl)-4-methylthiazole: step 1/1.</text>
</comment>
<comment type="similarity">
    <text evidence="1">Belongs to the Thz kinase family.</text>
</comment>
<organism>
    <name type="scientific">Clostridium botulinum (strain Langeland / NCTC 10281 / Type F)</name>
    <dbReference type="NCBI Taxonomy" id="441772"/>
    <lineage>
        <taxon>Bacteria</taxon>
        <taxon>Bacillati</taxon>
        <taxon>Bacillota</taxon>
        <taxon>Clostridia</taxon>
        <taxon>Eubacteriales</taxon>
        <taxon>Clostridiaceae</taxon>
        <taxon>Clostridium</taxon>
    </lineage>
</organism>
<dbReference type="EC" id="2.7.1.50" evidence="1"/>
<dbReference type="EMBL" id="CP000728">
    <property type="protein sequence ID" value="ABS39869.1"/>
    <property type="molecule type" value="Genomic_DNA"/>
</dbReference>
<dbReference type="RefSeq" id="WP_012100224.1">
    <property type="nucleotide sequence ID" value="NC_009699.1"/>
</dbReference>
<dbReference type="SMR" id="A7GFJ3"/>
<dbReference type="KEGG" id="cbf:CLI_2303"/>
<dbReference type="HOGENOM" id="CLU_019943_0_0_9"/>
<dbReference type="UniPathway" id="UPA00060">
    <property type="reaction ID" value="UER00139"/>
</dbReference>
<dbReference type="Proteomes" id="UP000002410">
    <property type="component" value="Chromosome"/>
</dbReference>
<dbReference type="GO" id="GO:0005524">
    <property type="term" value="F:ATP binding"/>
    <property type="evidence" value="ECO:0007669"/>
    <property type="project" value="UniProtKB-UniRule"/>
</dbReference>
<dbReference type="GO" id="GO:0004417">
    <property type="term" value="F:hydroxyethylthiazole kinase activity"/>
    <property type="evidence" value="ECO:0007669"/>
    <property type="project" value="UniProtKB-UniRule"/>
</dbReference>
<dbReference type="GO" id="GO:0000287">
    <property type="term" value="F:magnesium ion binding"/>
    <property type="evidence" value="ECO:0007669"/>
    <property type="project" value="UniProtKB-UniRule"/>
</dbReference>
<dbReference type="GO" id="GO:0009228">
    <property type="term" value="P:thiamine biosynthetic process"/>
    <property type="evidence" value="ECO:0007669"/>
    <property type="project" value="UniProtKB-KW"/>
</dbReference>
<dbReference type="GO" id="GO:0009229">
    <property type="term" value="P:thiamine diphosphate biosynthetic process"/>
    <property type="evidence" value="ECO:0007669"/>
    <property type="project" value="UniProtKB-UniRule"/>
</dbReference>
<dbReference type="CDD" id="cd01170">
    <property type="entry name" value="THZ_kinase"/>
    <property type="match status" value="1"/>
</dbReference>
<dbReference type="Gene3D" id="3.40.1190.20">
    <property type="match status" value="1"/>
</dbReference>
<dbReference type="HAMAP" id="MF_00228">
    <property type="entry name" value="Thz_kinase"/>
    <property type="match status" value="1"/>
</dbReference>
<dbReference type="InterPro" id="IPR000417">
    <property type="entry name" value="Hyethyz_kinase"/>
</dbReference>
<dbReference type="InterPro" id="IPR029056">
    <property type="entry name" value="Ribokinase-like"/>
</dbReference>
<dbReference type="NCBIfam" id="NF006830">
    <property type="entry name" value="PRK09355.1"/>
    <property type="match status" value="1"/>
</dbReference>
<dbReference type="Pfam" id="PF02110">
    <property type="entry name" value="HK"/>
    <property type="match status" value="1"/>
</dbReference>
<dbReference type="PIRSF" id="PIRSF000513">
    <property type="entry name" value="Thz_kinase"/>
    <property type="match status" value="1"/>
</dbReference>
<dbReference type="PRINTS" id="PR01099">
    <property type="entry name" value="HYETHTZKNASE"/>
</dbReference>
<dbReference type="SUPFAM" id="SSF53613">
    <property type="entry name" value="Ribokinase-like"/>
    <property type="match status" value="1"/>
</dbReference>
<name>THIM2_CLOBL</name>
<proteinExistence type="inferred from homology"/>
<protein>
    <recommendedName>
        <fullName evidence="1">Hydroxyethylthiazole kinase 2</fullName>
        <ecNumber evidence="1">2.7.1.50</ecNumber>
    </recommendedName>
    <alternativeName>
        <fullName evidence="1">4-methyl-5-beta-hydroxyethylthiazole kinase 2</fullName>
        <shortName evidence="1">TH kinase 2</shortName>
        <shortName evidence="1">Thz kinase 2</shortName>
    </alternativeName>
</protein>
<feature type="chain" id="PRO_0000383845" description="Hydroxyethylthiazole kinase 2">
    <location>
        <begin position="1"/>
        <end position="265"/>
    </location>
</feature>
<feature type="binding site" evidence="1">
    <location>
        <position position="39"/>
    </location>
    <ligand>
        <name>substrate</name>
    </ligand>
</feature>
<feature type="binding site" evidence="1">
    <location>
        <position position="115"/>
    </location>
    <ligand>
        <name>ATP</name>
        <dbReference type="ChEBI" id="CHEBI:30616"/>
    </ligand>
</feature>
<feature type="binding site" evidence="1">
    <location>
        <position position="168"/>
    </location>
    <ligand>
        <name>ATP</name>
        <dbReference type="ChEBI" id="CHEBI:30616"/>
    </ligand>
</feature>
<feature type="binding site" evidence="1">
    <location>
        <position position="195"/>
    </location>
    <ligand>
        <name>substrate</name>
    </ligand>
</feature>
<keyword id="KW-0067">ATP-binding</keyword>
<keyword id="KW-0418">Kinase</keyword>
<keyword id="KW-0460">Magnesium</keyword>
<keyword id="KW-0479">Metal-binding</keyword>
<keyword id="KW-0547">Nucleotide-binding</keyword>
<keyword id="KW-0784">Thiamine biosynthesis</keyword>
<keyword id="KW-0808">Transferase</keyword>
<gene>
    <name evidence="1" type="primary">thiM2</name>
    <name type="ordered locus">CLI_2303</name>
</gene>
<evidence type="ECO:0000255" key="1">
    <source>
        <dbReference type="HAMAP-Rule" id="MF_00228"/>
    </source>
</evidence>
<reference key="1">
    <citation type="submission" date="2007-06" db="EMBL/GenBank/DDBJ databases">
        <authorList>
            <person name="Brinkac L.M."/>
            <person name="Daugherty S."/>
            <person name="Dodson R.J."/>
            <person name="Madupu R."/>
            <person name="Brown J.L."/>
            <person name="Bruce D."/>
            <person name="Detter C."/>
            <person name="Munk C."/>
            <person name="Smith L.A."/>
            <person name="Smith T.J."/>
            <person name="White O."/>
            <person name="Brettin T.S."/>
        </authorList>
    </citation>
    <scope>NUCLEOTIDE SEQUENCE [LARGE SCALE GENOMIC DNA]</scope>
    <source>
        <strain>Langeland / NCTC 10281 / Type F</strain>
    </source>
</reference>
<sequence length="265" mass="28593">MEIRQNVKFKKPLIHYITNPISINDCANMILAAGAKPIMAEHPLEVSEITSASKSLGVNIGNITDNKMKSMLISGKTAYENKIPQVIDLVGVGCSKLRLDYAKKFISECHPNVIKGNMSEIKAIYGIKSSAKGIDVGACDIITEQNFDENIEMIKRLSMETGSVVAATGVVDIISNGTYTYIISNGCEMLSMITGTGCMLTGIIASYISSGNILEGTALAIVLMGICGELSQHVKGTGSFRNELIDNIFSISDDIIIKKIRINSY</sequence>